<accession>Q969G5</accession>
<protein>
    <recommendedName>
        <fullName evidence="9">Caveolae-associated protein 3</fullName>
    </recommendedName>
    <alternativeName>
        <fullName>Cavin-3</fullName>
    </alternativeName>
    <alternativeName>
        <fullName>Protein kinase C delta-binding protein</fullName>
    </alternativeName>
    <alternativeName>
        <fullName>Serum deprivation response factor-related gene product that binds to C-kinase</fullName>
        <shortName>hSRBC</shortName>
    </alternativeName>
</protein>
<evidence type="ECO:0000250" key="1">
    <source>
        <dbReference type="UniProtKB" id="Q91VJ2"/>
    </source>
</evidence>
<evidence type="ECO:0000250" key="2">
    <source>
        <dbReference type="UniProtKB" id="Q9Z1H9"/>
    </source>
</evidence>
<evidence type="ECO:0000256" key="3">
    <source>
        <dbReference type="SAM" id="MobiDB-lite"/>
    </source>
</evidence>
<evidence type="ECO:0000269" key="4">
    <source>
    </source>
</evidence>
<evidence type="ECO:0000269" key="5">
    <source>
    </source>
</evidence>
<evidence type="ECO:0000269" key="6">
    <source>
    </source>
</evidence>
<evidence type="ECO:0000269" key="7">
    <source ref="3"/>
</evidence>
<evidence type="ECO:0000305" key="8"/>
<evidence type="ECO:0000312" key="9">
    <source>
        <dbReference type="HGNC" id="HGNC:9400"/>
    </source>
</evidence>
<evidence type="ECO:0007744" key="10">
    <source>
    </source>
</evidence>
<evidence type="ECO:0007744" key="11">
    <source>
    </source>
</evidence>
<evidence type="ECO:0007744" key="12">
    <source>
    </source>
</evidence>
<evidence type="ECO:0007744" key="13">
    <source>
    </source>
</evidence>
<evidence type="ECO:0007744" key="14">
    <source>
    </source>
</evidence>
<evidence type="ECO:0007744" key="15">
    <source>
    </source>
</evidence>
<dbReference type="EMBL" id="AF339881">
    <property type="protein sequence ID" value="AAK97572.1"/>
    <property type="molecule type" value="mRNA"/>
</dbReference>
<dbReference type="EMBL" id="AF408198">
    <property type="protein sequence ID" value="AAK97528.1"/>
    <property type="molecule type" value="Genomic_DNA"/>
</dbReference>
<dbReference type="EMBL" id="AC068733">
    <property type="status" value="NOT_ANNOTATED_CDS"/>
    <property type="molecule type" value="Genomic_DNA"/>
</dbReference>
<dbReference type="EMBL" id="CH471064">
    <property type="protein sequence ID" value="EAW68733.1"/>
    <property type="molecule type" value="Genomic_DNA"/>
</dbReference>
<dbReference type="EMBL" id="BC011585">
    <property type="protein sequence ID" value="AAH11585.1"/>
    <property type="molecule type" value="mRNA"/>
</dbReference>
<dbReference type="CCDS" id="CCDS7762.1"/>
<dbReference type="RefSeq" id="NP_659477.2">
    <property type="nucleotide sequence ID" value="NM_145040.2"/>
</dbReference>
<dbReference type="SMR" id="Q969G5"/>
<dbReference type="BioGRID" id="125187">
    <property type="interactions" value="157"/>
</dbReference>
<dbReference type="DIP" id="DIP-60484N"/>
<dbReference type="FunCoup" id="Q969G5">
    <property type="interactions" value="702"/>
</dbReference>
<dbReference type="IntAct" id="Q969G5">
    <property type="interactions" value="58"/>
</dbReference>
<dbReference type="MINT" id="Q969G5"/>
<dbReference type="STRING" id="9606.ENSP00000307292"/>
<dbReference type="GlyGen" id="Q969G5">
    <property type="glycosylation" value="2 sites, 1 O-linked glycan (1 site)"/>
</dbReference>
<dbReference type="iPTMnet" id="Q969G5"/>
<dbReference type="MetOSite" id="Q969G5"/>
<dbReference type="PhosphoSitePlus" id="Q969G5"/>
<dbReference type="BioMuta" id="CAVIN3"/>
<dbReference type="DMDM" id="317373527"/>
<dbReference type="jPOST" id="Q969G5"/>
<dbReference type="MassIVE" id="Q969G5"/>
<dbReference type="PaxDb" id="9606-ENSP00000307292"/>
<dbReference type="PeptideAtlas" id="Q969G5"/>
<dbReference type="ProteomicsDB" id="75756"/>
<dbReference type="Pumba" id="Q969G5"/>
<dbReference type="Antibodypedia" id="23796">
    <property type="antibodies" value="204 antibodies from 33 providers"/>
</dbReference>
<dbReference type="DNASU" id="112464"/>
<dbReference type="Ensembl" id="ENST00000303927.4">
    <property type="protein sequence ID" value="ENSP00000307292.3"/>
    <property type="gene ID" value="ENSG00000170955.10"/>
</dbReference>
<dbReference type="GeneID" id="112464"/>
<dbReference type="KEGG" id="hsa:112464"/>
<dbReference type="MANE-Select" id="ENST00000303927.4">
    <property type="protein sequence ID" value="ENSP00000307292.3"/>
    <property type="RefSeq nucleotide sequence ID" value="NM_145040.3"/>
    <property type="RefSeq protein sequence ID" value="NP_659477.2"/>
</dbReference>
<dbReference type="UCSC" id="uc001mcu.2">
    <property type="organism name" value="human"/>
</dbReference>
<dbReference type="AGR" id="HGNC:9400"/>
<dbReference type="CTD" id="112464"/>
<dbReference type="DisGeNET" id="112464"/>
<dbReference type="GeneCards" id="CAVIN3"/>
<dbReference type="HGNC" id="HGNC:9400">
    <property type="gene designation" value="CAVIN3"/>
</dbReference>
<dbReference type="HPA" id="ENSG00000170955">
    <property type="expression patterns" value="Low tissue specificity"/>
</dbReference>
<dbReference type="MIM" id="618303">
    <property type="type" value="gene"/>
</dbReference>
<dbReference type="neXtProt" id="NX_Q969G5"/>
<dbReference type="OpenTargets" id="ENSG00000170955"/>
<dbReference type="PharmGKB" id="PA33764"/>
<dbReference type="VEuPathDB" id="HostDB:ENSG00000170955"/>
<dbReference type="eggNOG" id="ENOG502QQCA">
    <property type="taxonomic scope" value="Eukaryota"/>
</dbReference>
<dbReference type="GeneTree" id="ENSGT00950000182910"/>
<dbReference type="InParanoid" id="Q969G5"/>
<dbReference type="OrthoDB" id="9451657at2759"/>
<dbReference type="PAN-GO" id="Q969G5">
    <property type="GO annotations" value="3 GO annotations based on evolutionary models"/>
</dbReference>
<dbReference type="PhylomeDB" id="Q969G5"/>
<dbReference type="TreeFam" id="TF331031"/>
<dbReference type="PathwayCommons" id="Q969G5"/>
<dbReference type="SignaLink" id="Q969G5"/>
<dbReference type="BioGRID-ORCS" id="112464">
    <property type="hits" value="8 hits in 1150 CRISPR screens"/>
</dbReference>
<dbReference type="ChiTaRS" id="PRKCDBP">
    <property type="organism name" value="human"/>
</dbReference>
<dbReference type="GenomeRNAi" id="112464"/>
<dbReference type="Pharos" id="Q969G5">
    <property type="development level" value="Tbio"/>
</dbReference>
<dbReference type="PRO" id="PR:Q969G5"/>
<dbReference type="Proteomes" id="UP000005640">
    <property type="component" value="Chromosome 11"/>
</dbReference>
<dbReference type="RNAct" id="Q969G5">
    <property type="molecule type" value="protein"/>
</dbReference>
<dbReference type="Bgee" id="ENSG00000170955">
    <property type="expression patterns" value="Expressed in right coronary artery and 179 other cell types or tissues"/>
</dbReference>
<dbReference type="ExpressionAtlas" id="Q969G5">
    <property type="expression patterns" value="baseline and differential"/>
</dbReference>
<dbReference type="GO" id="GO:0005901">
    <property type="term" value="C:caveola"/>
    <property type="evidence" value="ECO:0000314"/>
    <property type="project" value="UniProtKB"/>
</dbReference>
<dbReference type="GO" id="GO:0005737">
    <property type="term" value="C:cytoplasm"/>
    <property type="evidence" value="ECO:0000250"/>
    <property type="project" value="UniProtKB"/>
</dbReference>
<dbReference type="GO" id="GO:0005829">
    <property type="term" value="C:cytosol"/>
    <property type="evidence" value="ECO:0007669"/>
    <property type="project" value="UniProtKB-SubCell"/>
</dbReference>
<dbReference type="GO" id="GO:0032991">
    <property type="term" value="C:protein-containing complex"/>
    <property type="evidence" value="ECO:0000314"/>
    <property type="project" value="MGI"/>
</dbReference>
<dbReference type="GO" id="GO:0005080">
    <property type="term" value="F:protein kinase C binding"/>
    <property type="evidence" value="ECO:0000318"/>
    <property type="project" value="GO_Central"/>
</dbReference>
<dbReference type="GO" id="GO:0032922">
    <property type="term" value="P:circadian regulation of gene expression"/>
    <property type="evidence" value="ECO:0000250"/>
    <property type="project" value="UniProtKB"/>
</dbReference>
<dbReference type="GO" id="GO:0030866">
    <property type="term" value="P:cortical actin cytoskeleton organization"/>
    <property type="evidence" value="ECO:0007669"/>
    <property type="project" value="Ensembl"/>
</dbReference>
<dbReference type="GO" id="GO:1901003">
    <property type="term" value="P:negative regulation of fermentation"/>
    <property type="evidence" value="ECO:0007669"/>
    <property type="project" value="Ensembl"/>
</dbReference>
<dbReference type="GO" id="GO:0051898">
    <property type="term" value="P:negative regulation of phosphatidylinositol 3-kinase/protein kinase B signal transduction"/>
    <property type="evidence" value="ECO:0007669"/>
    <property type="project" value="Ensembl"/>
</dbReference>
<dbReference type="GO" id="GO:0070374">
    <property type="term" value="P:positive regulation of ERK1 and ERK2 cascade"/>
    <property type="evidence" value="ECO:0007669"/>
    <property type="project" value="Ensembl"/>
</dbReference>
<dbReference type="InterPro" id="IPR026752">
    <property type="entry name" value="Cavin_fam"/>
</dbReference>
<dbReference type="PANTHER" id="PTHR15240:SF2">
    <property type="entry name" value="CAVEOLAE-ASSOCIATED PROTEIN 3"/>
    <property type="match status" value="1"/>
</dbReference>
<dbReference type="PANTHER" id="PTHR15240">
    <property type="entry name" value="CAVIN"/>
    <property type="match status" value="1"/>
</dbReference>
<dbReference type="Pfam" id="PF15237">
    <property type="entry name" value="PTRF_SDPR"/>
    <property type="match status" value="1"/>
</dbReference>
<comment type="function">
    <text evidence="1 2 6">Regulates the traffic and/or budding of caveolae (PubMed:19262564). Plays a role in caveola formation in a tissue-specific manner. Required for the formation of caveolae in smooth muscle but not in the lung and heart endothelial cells. Regulates the equilibrium between cell surface-associated and cell surface-dissociated caveolae by promoting the rapid release of caveolae from the cell surface. Plays a role in the regulation of the circadian clock. Modulates the period length and phase of circadian gene expression and also regulates expression and interaction of the core clock components PER1/2 and CRY1/2 (By similarity).</text>
</comment>
<comment type="subunit">
    <text evidence="1 6">Component of the CAVIN complex composed of CAVIN1, CAVIN2, CAVIN3 and CAVIN4. Interacts with PRKCD and with phosphatidylserine. Phosphatidylserine may form a bridge between PKC and PKC-binding partners and stabilize the binding. Interacts with PER2. Interacts with CAVIN1 (By similarity). Interacts (via leucine-zipper domain) with CAV1 in a cholesterol-sensitive manner (PubMed:19262564). Interacts with EPS15L1 (PubMed:19262564).</text>
</comment>
<comment type="interaction">
    <interactant intactId="EBI-3893101">
        <id>Q969G5</id>
    </interactant>
    <interactant intactId="EBI-603614">
        <id>Q03135</id>
        <label>CAV1</label>
    </interactant>
    <organismsDiffer>false</organismsDiffer>
    <experiments>11</experiments>
</comment>
<comment type="interaction">
    <interactant intactId="EBI-3893101">
        <id>Q969G5</id>
    </interactant>
    <interactant intactId="EBI-2559016">
        <id>Q6NZI2</id>
        <label>CAVIN1</label>
    </interactant>
    <organismsDiffer>false</organismsDiffer>
    <experiments>12</experiments>
</comment>
<comment type="interaction">
    <interactant intactId="EBI-3893101">
        <id>Q969G5</id>
    </interactant>
    <interactant intactId="EBI-739624">
        <id>Q8NHQ1</id>
        <label>CEP70</label>
    </interactant>
    <organismsDiffer>false</organismsDiffer>
    <experiments>3</experiments>
</comment>
<comment type="interaction">
    <interactant intactId="EBI-3893101">
        <id>Q969G5</id>
    </interactant>
    <interactant intactId="EBI-742887">
        <id>Q8TAP6</id>
        <label>CEP76</label>
    </interactant>
    <organismsDiffer>false</organismsDiffer>
    <experiments>3</experiments>
</comment>
<comment type="interaction">
    <interactant intactId="EBI-3893101">
        <id>Q969G5</id>
    </interactant>
    <interactant intactId="EBI-2556746">
        <id>Q9UBC2</id>
        <label>EPS15L1</label>
    </interactant>
    <organismsDiffer>false</organismsDiffer>
    <experiments>2</experiments>
</comment>
<comment type="interaction">
    <interactant intactId="EBI-3893101">
        <id>Q969G5</id>
    </interactant>
    <interactant intactId="EBI-5916454">
        <id>A6NEM1</id>
        <label>GOLGA6L9</label>
    </interactant>
    <organismsDiffer>false</organismsDiffer>
    <experiments>3</experiments>
</comment>
<comment type="interaction">
    <interactant intactId="EBI-3893101">
        <id>Q969G5</id>
    </interactant>
    <interactant intactId="EBI-473189">
        <id>Q96D09</id>
        <label>GPRASP2</label>
    </interactant>
    <organismsDiffer>false</organismsDiffer>
    <experiments>3</experiments>
</comment>
<comment type="interaction">
    <interactant intactId="EBI-3893101">
        <id>Q969G5</id>
    </interactant>
    <interactant intactId="EBI-739552">
        <id>P43364</id>
        <label>MAGEA11</label>
    </interactant>
    <organismsDiffer>false</organismsDiffer>
    <experiments>3</experiments>
</comment>
<comment type="interaction">
    <interactant intactId="EBI-3893101">
        <id>Q969G5</id>
    </interactant>
    <interactant intactId="EBI-995714">
        <id>Q9Y605</id>
        <label>MRFAP1</label>
    </interactant>
    <organismsDiffer>false</organismsDiffer>
    <experiments>6</experiments>
</comment>
<comment type="interaction">
    <interactant intactId="EBI-3893101">
        <id>Q969G5</id>
    </interactant>
    <interactant intactId="EBI-748896">
        <id>Q96HT8</id>
        <label>MRFAP1L1</label>
    </interactant>
    <organismsDiffer>false</organismsDiffer>
    <experiments>7</experiments>
</comment>
<comment type="interaction">
    <interactant intactId="EBI-3893101">
        <id>Q969G5</id>
    </interactant>
    <interactant intactId="EBI-347978">
        <id>P37198</id>
        <label>NUP62</label>
    </interactant>
    <organismsDiffer>false</organismsDiffer>
    <experiments>3</experiments>
</comment>
<comment type="interaction">
    <interactant intactId="EBI-3893101">
        <id>Q969G5</id>
    </interactant>
    <interactant intactId="EBI-1105213">
        <id>Q9UBB9</id>
        <label>TFIP11</label>
    </interactant>
    <organismsDiffer>false</organismsDiffer>
    <experiments>3</experiments>
</comment>
<comment type="interaction">
    <interactant intactId="EBI-3893101">
        <id>Q969G5</id>
    </interactant>
    <interactant intactId="EBI-1049822">
        <id>O60220</id>
        <label>TIMM8A</label>
    </interactant>
    <organismsDiffer>false</organismsDiffer>
    <experiments>3</experiments>
</comment>
<comment type="interaction">
    <interactant intactId="EBI-3893101">
        <id>Q969G5</id>
    </interactant>
    <interactant intactId="EBI-355607">
        <id>P06753</id>
        <label>TPM3</label>
    </interactant>
    <organismsDiffer>false</organismsDiffer>
    <experiments>4</experiments>
</comment>
<comment type="subcellular location">
    <subcellularLocation>
        <location evidence="1">Cytoplasm</location>
    </subcellularLocation>
    <subcellularLocation>
        <location evidence="6">Membrane</location>
        <location evidence="6">Caveola</location>
    </subcellularLocation>
    <subcellularLocation>
        <location evidence="1">Cytoplasm</location>
        <location evidence="1">Cytosol</location>
    </subcellularLocation>
    <text evidence="6">Localizes in the caveolae in a caveolin-dependent manner.</text>
</comment>
<comment type="tissue specificity">
    <text evidence="4 6">Skeletal muscle, liver, stomach, lung, kidney and heart (at protein level). Strongly expressed in mammary and epithelial cells.</text>
</comment>
<comment type="induction">
    <text evidence="4">Down-regulated in breast and lung cancer cell lines.</text>
</comment>
<comment type="domain">
    <text evidence="6">The leucine-zipper domain is essential for its localization in the caveolae and for its interaction with CAV1 and EPS15L1.</text>
</comment>
<comment type="PTM">
    <text>In vitro, phosphorylated by PRKCD.</text>
</comment>
<comment type="similarity">
    <text evidence="8">Belongs to the CAVIN family.</text>
</comment>
<proteinExistence type="evidence at protein level"/>
<name>CAVN3_HUMAN</name>
<feature type="chain" id="PRO_0000331412" description="Caveolae-associated protein 3">
    <location>
        <begin position="1"/>
        <end position="261"/>
    </location>
</feature>
<feature type="region of interest" description="Interaction with CAVIN1" evidence="1">
    <location>
        <begin position="1"/>
        <end position="84"/>
    </location>
</feature>
<feature type="region of interest" description="Leucine-zipper" evidence="6">
    <location>
        <begin position="20"/>
        <end position="78"/>
    </location>
</feature>
<feature type="region of interest" description="Interaction with CAV1" evidence="1">
    <location>
        <begin position="135"/>
        <end position="203"/>
    </location>
</feature>
<feature type="region of interest" description="Disordered" evidence="3">
    <location>
        <begin position="139"/>
        <end position="261"/>
    </location>
</feature>
<feature type="compositionally biased region" description="Acidic residues" evidence="3">
    <location>
        <begin position="158"/>
        <end position="170"/>
    </location>
</feature>
<feature type="compositionally biased region" description="Pro residues" evidence="3">
    <location>
        <begin position="200"/>
        <end position="212"/>
    </location>
</feature>
<feature type="compositionally biased region" description="Low complexity" evidence="3">
    <location>
        <begin position="213"/>
        <end position="231"/>
    </location>
</feature>
<feature type="modified residue" description="Phosphoserine" evidence="13 14">
    <location>
        <position position="62"/>
    </location>
</feature>
<feature type="modified residue" description="Phosphoserine" evidence="13">
    <location>
        <position position="70"/>
    </location>
</feature>
<feature type="modified residue" description="Phosphoserine" evidence="10 11 12 14">
    <location>
        <position position="165"/>
    </location>
</feature>
<feature type="modified residue" description="Phosphoserine" evidence="10 11 12 14">
    <location>
        <position position="166"/>
    </location>
</feature>
<feature type="modified residue" description="Phosphoserine" evidence="1">
    <location>
        <position position="173"/>
    </location>
</feature>
<feature type="cross-link" description="Glycyl lysine isopeptide (Lys-Gly) (interchain with G-Cter in SUMO2)" evidence="15">
    <location>
        <position position="128"/>
    </location>
</feature>
<feature type="sequence variant" id="VAR_042851" description="In dbSNP:rs2682123." evidence="4 5 7">
    <original>R</original>
    <variation>P</variation>
    <location>
        <position position="8"/>
    </location>
</feature>
<feature type="sequence variant" id="VAR_042852" description="In dbSNP:rs10839551.">
    <original>A</original>
    <variation>T</variation>
    <location>
        <position position="104"/>
    </location>
</feature>
<feature type="sequence variant" id="VAR_042853" description="In dbSNP:rs1051992.">
    <original>L</original>
    <variation>P</variation>
    <location>
        <position position="158"/>
    </location>
</feature>
<feature type="sequence variant" id="VAR_042854" description="In dbSNP:rs12294600.">
    <original>L</original>
    <variation>F</variation>
    <location>
        <position position="255"/>
    </location>
</feature>
<gene>
    <name evidence="9" type="primary">CAVIN3</name>
    <name type="synonym">PRKCDBP</name>
    <name type="synonym">SRBC</name>
</gene>
<keyword id="KW-0090">Biological rhythms</keyword>
<keyword id="KW-0963">Cytoplasm</keyword>
<keyword id="KW-1017">Isopeptide bond</keyword>
<keyword id="KW-0472">Membrane</keyword>
<keyword id="KW-0597">Phosphoprotein</keyword>
<keyword id="KW-1267">Proteomics identification</keyword>
<keyword id="KW-1185">Reference proteome</keyword>
<keyword id="KW-0043">Tumor suppressor</keyword>
<keyword id="KW-0832">Ubl conjugation</keyword>
<reference key="1">
    <citation type="journal article" date="2001" name="Cancer Res.">
        <title>Inactivation of human SRBC, located within the 11p15.5-p15.4 tumor suppressor region, in breast and lung cancers.</title>
        <authorList>
            <person name="Xu X.L."/>
            <person name="Wu L.C."/>
            <person name="Du F."/>
            <person name="Davis A."/>
            <person name="Peyton M."/>
            <person name="Tomizawa Y."/>
            <person name="Maitra A."/>
            <person name="Tomlinson G."/>
            <person name="Gazdar A.F."/>
            <person name="Weissman B.E."/>
            <person name="Bowcock A.M."/>
            <person name="Baer R."/>
            <person name="Minna J.D."/>
        </authorList>
    </citation>
    <scope>NUCLEOTIDE SEQUENCE [GENOMIC DNA / MRNA]</scope>
    <scope>INDUCTION</scope>
    <scope>TISSUE SPECIFICITY</scope>
    <scope>VARIANT PRO-8</scope>
    <source>
        <tissue>Epithelium</tissue>
    </source>
</reference>
<reference key="2">
    <citation type="journal article" date="2006" name="Nature">
        <title>Human chromosome 11 DNA sequence and analysis including novel gene identification.</title>
        <authorList>
            <person name="Taylor T.D."/>
            <person name="Noguchi H."/>
            <person name="Totoki Y."/>
            <person name="Toyoda A."/>
            <person name="Kuroki Y."/>
            <person name="Dewar K."/>
            <person name="Lloyd C."/>
            <person name="Itoh T."/>
            <person name="Takeda T."/>
            <person name="Kim D.-W."/>
            <person name="She X."/>
            <person name="Barlow K.F."/>
            <person name="Bloom T."/>
            <person name="Bruford E."/>
            <person name="Chang J.L."/>
            <person name="Cuomo C.A."/>
            <person name="Eichler E."/>
            <person name="FitzGerald M.G."/>
            <person name="Jaffe D.B."/>
            <person name="LaButti K."/>
            <person name="Nicol R."/>
            <person name="Park H.-S."/>
            <person name="Seaman C."/>
            <person name="Sougnez C."/>
            <person name="Yang X."/>
            <person name="Zimmer A.R."/>
            <person name="Zody M.C."/>
            <person name="Birren B.W."/>
            <person name="Nusbaum C."/>
            <person name="Fujiyama A."/>
            <person name="Hattori M."/>
            <person name="Rogers J."/>
            <person name="Lander E.S."/>
            <person name="Sakaki Y."/>
        </authorList>
    </citation>
    <scope>NUCLEOTIDE SEQUENCE [LARGE SCALE GENOMIC DNA]</scope>
</reference>
<reference key="3">
    <citation type="submission" date="2005-09" db="EMBL/GenBank/DDBJ databases">
        <authorList>
            <person name="Mural R.J."/>
            <person name="Istrail S."/>
            <person name="Sutton G.G."/>
            <person name="Florea L."/>
            <person name="Halpern A.L."/>
            <person name="Mobarry C.M."/>
            <person name="Lippert R."/>
            <person name="Walenz B."/>
            <person name="Shatkay H."/>
            <person name="Dew I."/>
            <person name="Miller J.R."/>
            <person name="Flanigan M.J."/>
            <person name="Edwards N.J."/>
            <person name="Bolanos R."/>
            <person name="Fasulo D."/>
            <person name="Halldorsson B.V."/>
            <person name="Hannenhalli S."/>
            <person name="Turner R."/>
            <person name="Yooseph S."/>
            <person name="Lu F."/>
            <person name="Nusskern D.R."/>
            <person name="Shue B.C."/>
            <person name="Zheng X.H."/>
            <person name="Zhong F."/>
            <person name="Delcher A.L."/>
            <person name="Huson D.H."/>
            <person name="Kravitz S.A."/>
            <person name="Mouchard L."/>
            <person name="Reinert K."/>
            <person name="Remington K.A."/>
            <person name="Clark A.G."/>
            <person name="Waterman M.S."/>
            <person name="Eichler E.E."/>
            <person name="Adams M.D."/>
            <person name="Hunkapiller M.W."/>
            <person name="Myers E.W."/>
            <person name="Venter J.C."/>
        </authorList>
    </citation>
    <scope>NUCLEOTIDE SEQUENCE [LARGE SCALE GENOMIC DNA]</scope>
    <scope>VARIANT PRO-8</scope>
</reference>
<reference key="4">
    <citation type="journal article" date="2004" name="Genome Res.">
        <title>The status, quality, and expansion of the NIH full-length cDNA project: the Mammalian Gene Collection (MGC).</title>
        <authorList>
            <consortium name="The MGC Project Team"/>
        </authorList>
    </citation>
    <scope>NUCLEOTIDE SEQUENCE [LARGE SCALE MRNA]</scope>
    <scope>VARIANT PRO-8</scope>
    <source>
        <tissue>Skin</tissue>
    </source>
</reference>
<reference key="5">
    <citation type="journal article" date="2006" name="Cell">
        <title>Global, in vivo, and site-specific phosphorylation dynamics in signaling networks.</title>
        <authorList>
            <person name="Olsen J.V."/>
            <person name="Blagoev B."/>
            <person name="Gnad F."/>
            <person name="Macek B."/>
            <person name="Kumar C."/>
            <person name="Mortensen P."/>
            <person name="Mann M."/>
        </authorList>
    </citation>
    <scope>IDENTIFICATION BY MASS SPECTROMETRY [LARGE SCALE ANALYSIS]</scope>
    <source>
        <tissue>Cervix carcinoma</tissue>
    </source>
</reference>
<reference key="6">
    <citation type="journal article" date="2008" name="J. Proteome Res.">
        <title>Combining protein-based IMAC, peptide-based IMAC, and MudPIT for efficient phosphoproteomic analysis.</title>
        <authorList>
            <person name="Cantin G.T."/>
            <person name="Yi W."/>
            <person name="Lu B."/>
            <person name="Park S.K."/>
            <person name="Xu T."/>
            <person name="Lee J.-D."/>
            <person name="Yates J.R. III"/>
        </authorList>
    </citation>
    <scope>IDENTIFICATION BY MASS SPECTROMETRY [LARGE SCALE ANALYSIS]</scope>
    <source>
        <tissue>Cervix carcinoma</tissue>
    </source>
</reference>
<reference key="7">
    <citation type="journal article" date="2008" name="Mol. Cell">
        <title>Kinase-selective enrichment enables quantitative phosphoproteomics of the kinome across the cell cycle.</title>
        <authorList>
            <person name="Daub H."/>
            <person name="Olsen J.V."/>
            <person name="Bairlein M."/>
            <person name="Gnad F."/>
            <person name="Oppermann F.S."/>
            <person name="Korner R."/>
            <person name="Greff Z."/>
            <person name="Keri G."/>
            <person name="Stemmann O."/>
            <person name="Mann M."/>
        </authorList>
    </citation>
    <scope>IDENTIFICATION BY MASS SPECTROMETRY [LARGE SCALE ANALYSIS]</scope>
    <source>
        <tissue>Cervix carcinoma</tissue>
    </source>
</reference>
<reference key="8">
    <citation type="journal article" date="2008" name="Proc. Natl. Acad. Sci. U.S.A.">
        <title>A quantitative atlas of mitotic phosphorylation.</title>
        <authorList>
            <person name="Dephoure N."/>
            <person name="Zhou C."/>
            <person name="Villen J."/>
            <person name="Beausoleil S.A."/>
            <person name="Bakalarski C.E."/>
            <person name="Elledge S.J."/>
            <person name="Gygi S.P."/>
        </authorList>
    </citation>
    <scope>PHOSPHORYLATION [LARGE SCALE ANALYSIS] AT SER-165 AND SER-166</scope>
    <scope>IDENTIFICATION BY MASS SPECTROMETRY [LARGE SCALE ANALYSIS]</scope>
    <source>
        <tissue>Cervix carcinoma</tissue>
    </source>
</reference>
<reference key="9">
    <citation type="journal article" date="2009" name="EMBO J.">
        <title>SRBC/cavin-3 is a caveolin adapter protein that regulates caveolae function.</title>
        <authorList>
            <person name="McMahon K.A."/>
            <person name="Zajicek H."/>
            <person name="Li W.P."/>
            <person name="Peyton M.J."/>
            <person name="Minna J.D."/>
            <person name="Hernandez V.J."/>
            <person name="Luby-Phelps K."/>
            <person name="Anderson R.G."/>
        </authorList>
    </citation>
    <scope>FUNCTION</scope>
    <scope>SUBCELLULAR LOCATION</scope>
    <scope>DOMAIN LEUCINE ZIPPER</scope>
    <scope>INTERACTION WITH CAV1 AND EPS15L1</scope>
    <scope>TISSUE SPECIFICITY</scope>
</reference>
<reference key="10">
    <citation type="journal article" date="2010" name="Sci. Signal.">
        <title>Quantitative phosphoproteomics reveals widespread full phosphorylation site occupancy during mitosis.</title>
        <authorList>
            <person name="Olsen J.V."/>
            <person name="Vermeulen M."/>
            <person name="Santamaria A."/>
            <person name="Kumar C."/>
            <person name="Miller M.L."/>
            <person name="Jensen L.J."/>
            <person name="Gnad F."/>
            <person name="Cox J."/>
            <person name="Jensen T.S."/>
            <person name="Nigg E.A."/>
            <person name="Brunak S."/>
            <person name="Mann M."/>
        </authorList>
    </citation>
    <scope>PHOSPHORYLATION [LARGE SCALE ANALYSIS] AT SER-165 AND SER-166</scope>
    <scope>IDENTIFICATION BY MASS SPECTROMETRY [LARGE SCALE ANALYSIS]</scope>
    <source>
        <tissue>Cervix carcinoma</tissue>
    </source>
</reference>
<reference key="11">
    <citation type="journal article" date="2011" name="Sci. Signal.">
        <title>System-wide temporal characterization of the proteome and phosphoproteome of human embryonic stem cell differentiation.</title>
        <authorList>
            <person name="Rigbolt K.T."/>
            <person name="Prokhorova T.A."/>
            <person name="Akimov V."/>
            <person name="Henningsen J."/>
            <person name="Johansen P.T."/>
            <person name="Kratchmarova I."/>
            <person name="Kassem M."/>
            <person name="Mann M."/>
            <person name="Olsen J.V."/>
            <person name="Blagoev B."/>
        </authorList>
    </citation>
    <scope>PHOSPHORYLATION [LARGE SCALE ANALYSIS] AT SER-165 AND SER-166</scope>
    <scope>IDENTIFICATION BY MASS SPECTROMETRY [LARGE SCALE ANALYSIS]</scope>
</reference>
<reference key="12">
    <citation type="journal article" date="2013" name="J. Proteome Res.">
        <title>Toward a comprehensive characterization of a human cancer cell phosphoproteome.</title>
        <authorList>
            <person name="Zhou H."/>
            <person name="Di Palma S."/>
            <person name="Preisinger C."/>
            <person name="Peng M."/>
            <person name="Polat A.N."/>
            <person name="Heck A.J."/>
            <person name="Mohammed S."/>
        </authorList>
    </citation>
    <scope>PHOSPHORYLATION [LARGE SCALE ANALYSIS] AT SER-62 AND SER-70</scope>
    <scope>IDENTIFICATION BY MASS SPECTROMETRY [LARGE SCALE ANALYSIS]</scope>
    <source>
        <tissue>Cervix carcinoma</tissue>
    </source>
</reference>
<reference key="13">
    <citation type="journal article" date="2014" name="J. Proteomics">
        <title>An enzyme assisted RP-RPLC approach for in-depth analysis of human liver phosphoproteome.</title>
        <authorList>
            <person name="Bian Y."/>
            <person name="Song C."/>
            <person name="Cheng K."/>
            <person name="Dong M."/>
            <person name="Wang F."/>
            <person name="Huang J."/>
            <person name="Sun D."/>
            <person name="Wang L."/>
            <person name="Ye M."/>
            <person name="Zou H."/>
        </authorList>
    </citation>
    <scope>PHOSPHORYLATION [LARGE SCALE ANALYSIS] AT SER-62; SER-165 AND SER-166</scope>
    <scope>IDENTIFICATION BY MASS SPECTROMETRY [LARGE SCALE ANALYSIS]</scope>
    <source>
        <tissue>Liver</tissue>
    </source>
</reference>
<reference key="14">
    <citation type="journal article" date="2015" name="Int. Rev. Cell Mol. Biol.">
        <title>Cavin family: new players in the biology of caveolae.</title>
        <authorList>
            <person name="Nassar Z.D."/>
            <person name="Parat M.O."/>
        </authorList>
    </citation>
    <scope>REVIEW</scope>
</reference>
<reference key="15">
    <citation type="journal article" date="2017" name="Nat. Struct. Mol. Biol.">
        <title>Site-specific mapping of the human SUMO proteome reveals co-modification with phosphorylation.</title>
        <authorList>
            <person name="Hendriks I.A."/>
            <person name="Lyon D."/>
            <person name="Young C."/>
            <person name="Jensen L.J."/>
            <person name="Vertegaal A.C."/>
            <person name="Nielsen M.L."/>
        </authorList>
    </citation>
    <scope>SUMOYLATION [LARGE SCALE ANALYSIS] AT LYS-128</scope>
    <scope>IDENTIFICATION BY MASS SPECTROMETRY [LARGE SCALE ANALYSIS]</scope>
</reference>
<sequence length="261" mass="27701">MRESALERGPVPEAPAGGPVHAVTVVTLLEKLASMLETLRERQGGLARRQGGLAGSVRRIQSGLGALSRSHDTTSNTLAQLLAKAERVSSHANAAQERAVRRAAQVQRLEANHGLLVARGKLHVLLFKEEGEVPASAFQKAPEPLGPADQSELGPEQLEAEVGESSDEEPVESRAQRLRRTGLQKVQSLRRALSGRKGPAAPPPTPVKPPRLGPGRSAEAQPEAQPALEPTLEPEPPQDTEEDPGRPGAAEEALLQMESVA</sequence>
<organism>
    <name type="scientific">Homo sapiens</name>
    <name type="common">Human</name>
    <dbReference type="NCBI Taxonomy" id="9606"/>
    <lineage>
        <taxon>Eukaryota</taxon>
        <taxon>Metazoa</taxon>
        <taxon>Chordata</taxon>
        <taxon>Craniata</taxon>
        <taxon>Vertebrata</taxon>
        <taxon>Euteleostomi</taxon>
        <taxon>Mammalia</taxon>
        <taxon>Eutheria</taxon>
        <taxon>Euarchontoglires</taxon>
        <taxon>Primates</taxon>
        <taxon>Haplorrhini</taxon>
        <taxon>Catarrhini</taxon>
        <taxon>Hominidae</taxon>
        <taxon>Homo</taxon>
    </lineage>
</organism>